<proteinExistence type="inferred from homology"/>
<dbReference type="EMBL" id="AE017194">
    <property type="protein sequence ID" value="AAS44532.1"/>
    <property type="molecule type" value="Genomic_DNA"/>
</dbReference>
<dbReference type="SMR" id="Q72WU6"/>
<dbReference type="KEGG" id="bca:BCE_5632"/>
<dbReference type="HOGENOM" id="CLU_023853_0_1_9"/>
<dbReference type="Proteomes" id="UP000002527">
    <property type="component" value="Chromosome"/>
</dbReference>
<dbReference type="GO" id="GO:0005694">
    <property type="term" value="C:chromosome"/>
    <property type="evidence" value="ECO:0007669"/>
    <property type="project" value="TreeGrafter"/>
</dbReference>
<dbReference type="GO" id="GO:0005737">
    <property type="term" value="C:cytoplasm"/>
    <property type="evidence" value="ECO:0007669"/>
    <property type="project" value="UniProtKB-UniRule"/>
</dbReference>
<dbReference type="GO" id="GO:0009295">
    <property type="term" value="C:nucleoid"/>
    <property type="evidence" value="ECO:0007669"/>
    <property type="project" value="UniProtKB-SubCell"/>
</dbReference>
<dbReference type="GO" id="GO:0003677">
    <property type="term" value="F:DNA binding"/>
    <property type="evidence" value="ECO:0007669"/>
    <property type="project" value="UniProtKB-UniRule"/>
</dbReference>
<dbReference type="GO" id="GO:0007059">
    <property type="term" value="P:chromosome segregation"/>
    <property type="evidence" value="ECO:0007669"/>
    <property type="project" value="TreeGrafter"/>
</dbReference>
<dbReference type="GO" id="GO:0000917">
    <property type="term" value="P:division septum assembly"/>
    <property type="evidence" value="ECO:0007669"/>
    <property type="project" value="UniProtKB-KW"/>
</dbReference>
<dbReference type="GO" id="GO:0045881">
    <property type="term" value="P:positive regulation of sporulation resulting in formation of a cellular spore"/>
    <property type="evidence" value="ECO:0007669"/>
    <property type="project" value="TreeGrafter"/>
</dbReference>
<dbReference type="CDD" id="cd16393">
    <property type="entry name" value="SPO0J_N"/>
    <property type="match status" value="1"/>
</dbReference>
<dbReference type="FunFam" id="1.10.10.2830:FF:000001">
    <property type="entry name" value="Chromosome partitioning protein ParB"/>
    <property type="match status" value="1"/>
</dbReference>
<dbReference type="FunFam" id="3.90.1530.30:FF:000001">
    <property type="entry name" value="Chromosome partitioning protein ParB"/>
    <property type="match status" value="1"/>
</dbReference>
<dbReference type="Gene3D" id="1.10.10.2830">
    <property type="match status" value="1"/>
</dbReference>
<dbReference type="Gene3D" id="3.90.1530.30">
    <property type="match status" value="1"/>
</dbReference>
<dbReference type="HAMAP" id="MF_02015">
    <property type="entry name" value="ParB_Noc"/>
    <property type="match status" value="1"/>
</dbReference>
<dbReference type="InterPro" id="IPR050336">
    <property type="entry name" value="Chromosome_partition/occlusion"/>
</dbReference>
<dbReference type="InterPro" id="IPR041468">
    <property type="entry name" value="HTH_ParB/Spo0J"/>
</dbReference>
<dbReference type="InterPro" id="IPR023705">
    <property type="entry name" value="Nucleoid_occlusion_protein"/>
</dbReference>
<dbReference type="InterPro" id="IPR004437">
    <property type="entry name" value="ParB/RepB/Spo0J"/>
</dbReference>
<dbReference type="InterPro" id="IPR003115">
    <property type="entry name" value="ParB/Sulfiredoxin_dom"/>
</dbReference>
<dbReference type="InterPro" id="IPR036086">
    <property type="entry name" value="ParB/Sulfiredoxin_sf"/>
</dbReference>
<dbReference type="NCBIfam" id="TIGR04285">
    <property type="entry name" value="nucleoid_noc"/>
    <property type="match status" value="1"/>
</dbReference>
<dbReference type="NCBIfam" id="TIGR00180">
    <property type="entry name" value="parB_part"/>
    <property type="match status" value="1"/>
</dbReference>
<dbReference type="PANTHER" id="PTHR33375">
    <property type="entry name" value="CHROMOSOME-PARTITIONING PROTEIN PARB-RELATED"/>
    <property type="match status" value="1"/>
</dbReference>
<dbReference type="PANTHER" id="PTHR33375:SF8">
    <property type="entry name" value="NUCLEOID OCCLUSION PROTEIN"/>
    <property type="match status" value="1"/>
</dbReference>
<dbReference type="Pfam" id="PF17762">
    <property type="entry name" value="HTH_ParB"/>
    <property type="match status" value="1"/>
</dbReference>
<dbReference type="Pfam" id="PF02195">
    <property type="entry name" value="ParBc"/>
    <property type="match status" value="1"/>
</dbReference>
<dbReference type="SMART" id="SM00470">
    <property type="entry name" value="ParB"/>
    <property type="match status" value="1"/>
</dbReference>
<dbReference type="SUPFAM" id="SSF110849">
    <property type="entry name" value="ParB/Sulfiredoxin"/>
    <property type="match status" value="1"/>
</dbReference>
<reference key="1">
    <citation type="journal article" date="2004" name="Nucleic Acids Res.">
        <title>The genome sequence of Bacillus cereus ATCC 10987 reveals metabolic adaptations and a large plasmid related to Bacillus anthracis pXO1.</title>
        <authorList>
            <person name="Rasko D.A."/>
            <person name="Ravel J."/>
            <person name="Oekstad O.A."/>
            <person name="Helgason E."/>
            <person name="Cer R.Z."/>
            <person name="Jiang L."/>
            <person name="Shores K.A."/>
            <person name="Fouts D.E."/>
            <person name="Tourasse N.J."/>
            <person name="Angiuoli S.V."/>
            <person name="Kolonay J.F."/>
            <person name="Nelson W.C."/>
            <person name="Kolstoe A.-B."/>
            <person name="Fraser C.M."/>
            <person name="Read T.D."/>
        </authorList>
    </citation>
    <scope>NUCLEOTIDE SEQUENCE [LARGE SCALE GENOMIC DNA]</scope>
    <source>
        <strain>ATCC 10987 / NRS 248</strain>
    </source>
</reference>
<evidence type="ECO:0000255" key="1">
    <source>
        <dbReference type="HAMAP-Rule" id="MF_02015"/>
    </source>
</evidence>
<feature type="chain" id="PRO_0000346618" description="Nucleoid occlusion protein">
    <location>
        <begin position="1"/>
        <end position="290"/>
    </location>
</feature>
<feature type="DNA-binding region" description="H-T-H motif" evidence="1">
    <location>
        <begin position="153"/>
        <end position="172"/>
    </location>
</feature>
<sequence length="290" mass="33614">MKNTFSRLFGFGDKESEFELQDESHEEIDKKVYEEIQEIPIVNITPNRYQPRTVFDDARIEELALTIRTHGLIQPIVVRQYEDDKYEIIAGERRFRAATKLGWEKVPAIIKNLNDTETASVALIENLQREELTAIEEAVAYQKLIELHNLTQEALAQRLGKGQSTIANKLRLLKLPEEIKNALLEKSITERHARALIPLKNEELQLKVLQEIVEKQLNVKQTEERIAKLLEEAKPKRKAKQKAVSRDTRIAMNTIRQSLQMVADSGLNVNSEEEEFDEYYQITIQIPKKK</sequence>
<accession>Q72WU6</accession>
<name>NOC_BACC1</name>
<comment type="function">
    <text evidence="1">Effects nucleoid occlusion by binding relatively nonspecifically to DNA and preventing the assembly of the division machinery in the vicinity of the nucleoid, especially under conditions that disturb the cell cycle. It helps to coordinate cell division and chromosome segregation by preventing the formation of the Z ring through the nucleoid, which would cause chromosome breakage.</text>
</comment>
<comment type="subcellular location">
    <subcellularLocation>
        <location evidence="1">Cytoplasm</location>
        <location evidence="1">Nucleoid</location>
    </subcellularLocation>
</comment>
<comment type="similarity">
    <text evidence="1">Belongs to the ParB family.</text>
</comment>
<keyword id="KW-0131">Cell cycle</keyword>
<keyword id="KW-0132">Cell division</keyword>
<keyword id="KW-0963">Cytoplasm</keyword>
<keyword id="KW-0238">DNA-binding</keyword>
<keyword id="KW-0717">Septation</keyword>
<gene>
    <name evidence="1" type="primary">noc</name>
    <name type="ordered locus">BCE_5632</name>
</gene>
<protein>
    <recommendedName>
        <fullName evidence="1">Nucleoid occlusion protein</fullName>
        <shortName evidence="1">Noc</shortName>
    </recommendedName>
</protein>
<organism>
    <name type="scientific">Bacillus cereus (strain ATCC 10987 / NRS 248)</name>
    <dbReference type="NCBI Taxonomy" id="222523"/>
    <lineage>
        <taxon>Bacteria</taxon>
        <taxon>Bacillati</taxon>
        <taxon>Bacillota</taxon>
        <taxon>Bacilli</taxon>
        <taxon>Bacillales</taxon>
        <taxon>Bacillaceae</taxon>
        <taxon>Bacillus</taxon>
        <taxon>Bacillus cereus group</taxon>
    </lineage>
</organism>